<name>MNME_OCEIH</name>
<sequence>MLDTDTITAISTPVGEGAIAIVRLSGSEAITITSQIFEGKNLQEVPSHTIQYGKIIDPGTNEVAEEVMVSIMRGPKTFTREDVVEINCHGGMVAVNRVLEIVLAKGVRLAEPGEFTKRAFLHGRIDLSQAEAVMDLIRAKTDKAMSVALKQMDGRLSKLIQKLRQELLETVAHVEVNIDYPEYDDVEEMSHAMMKEKSKEVRDELDKLLQIAQQGKILREGLSTAIIGRPNVGKSSLMNTLVQENKAIVTEIPGTTRDIIEEYVNVRGVPLRLVDTAGIRETEDIVERIGVDRSRQVLKESDLILFVLNYNEPLSEDDKKLFEAVDGLEYIVIINKTDLEQQLDLDEVREFAKDRPVVTTALLEEQGVDELEKAIADTFFTGDIDTGDMTYVSNVRHIQLLKQAKQALEDAMEGIELGMPMDIVQIDVTRSWEFMGEIIGDTASDSLIDQLFSQFCLGK</sequence>
<keyword id="KW-0963">Cytoplasm</keyword>
<keyword id="KW-0342">GTP-binding</keyword>
<keyword id="KW-0378">Hydrolase</keyword>
<keyword id="KW-0460">Magnesium</keyword>
<keyword id="KW-0479">Metal-binding</keyword>
<keyword id="KW-0547">Nucleotide-binding</keyword>
<keyword id="KW-0630">Potassium</keyword>
<keyword id="KW-1185">Reference proteome</keyword>
<keyword id="KW-0819">tRNA processing</keyword>
<dbReference type="EC" id="3.6.-.-" evidence="1"/>
<dbReference type="EMBL" id="BA000028">
    <property type="protein sequence ID" value="BAC15447.1"/>
    <property type="molecule type" value="Genomic_DNA"/>
</dbReference>
<dbReference type="RefSeq" id="WP_011067889.1">
    <property type="nucleotide sequence ID" value="NC_004193.1"/>
</dbReference>
<dbReference type="SMR" id="Q8CX54"/>
<dbReference type="STRING" id="221109.gene:10735743"/>
<dbReference type="KEGG" id="oih:OB3491"/>
<dbReference type="eggNOG" id="COG0486">
    <property type="taxonomic scope" value="Bacteria"/>
</dbReference>
<dbReference type="HOGENOM" id="CLU_019624_4_1_9"/>
<dbReference type="OrthoDB" id="9805918at2"/>
<dbReference type="PhylomeDB" id="Q8CX54"/>
<dbReference type="Proteomes" id="UP000000822">
    <property type="component" value="Chromosome"/>
</dbReference>
<dbReference type="GO" id="GO:0005829">
    <property type="term" value="C:cytosol"/>
    <property type="evidence" value="ECO:0007669"/>
    <property type="project" value="TreeGrafter"/>
</dbReference>
<dbReference type="GO" id="GO:0005525">
    <property type="term" value="F:GTP binding"/>
    <property type="evidence" value="ECO:0007669"/>
    <property type="project" value="UniProtKB-UniRule"/>
</dbReference>
<dbReference type="GO" id="GO:0003924">
    <property type="term" value="F:GTPase activity"/>
    <property type="evidence" value="ECO:0007669"/>
    <property type="project" value="UniProtKB-UniRule"/>
</dbReference>
<dbReference type="GO" id="GO:0046872">
    <property type="term" value="F:metal ion binding"/>
    <property type="evidence" value="ECO:0007669"/>
    <property type="project" value="UniProtKB-KW"/>
</dbReference>
<dbReference type="GO" id="GO:0030488">
    <property type="term" value="P:tRNA methylation"/>
    <property type="evidence" value="ECO:0007669"/>
    <property type="project" value="TreeGrafter"/>
</dbReference>
<dbReference type="GO" id="GO:0002098">
    <property type="term" value="P:tRNA wobble uridine modification"/>
    <property type="evidence" value="ECO:0007669"/>
    <property type="project" value="TreeGrafter"/>
</dbReference>
<dbReference type="CDD" id="cd04164">
    <property type="entry name" value="trmE"/>
    <property type="match status" value="1"/>
</dbReference>
<dbReference type="CDD" id="cd14858">
    <property type="entry name" value="TrmE_N"/>
    <property type="match status" value="1"/>
</dbReference>
<dbReference type="FunFam" id="3.30.1360.120:FF:000003">
    <property type="entry name" value="tRNA modification GTPase MnmE"/>
    <property type="match status" value="1"/>
</dbReference>
<dbReference type="FunFam" id="3.40.50.300:FF:000494">
    <property type="entry name" value="tRNA modification GTPase MnmE"/>
    <property type="match status" value="1"/>
</dbReference>
<dbReference type="Gene3D" id="3.40.50.300">
    <property type="entry name" value="P-loop containing nucleotide triphosphate hydrolases"/>
    <property type="match status" value="1"/>
</dbReference>
<dbReference type="Gene3D" id="3.30.1360.120">
    <property type="entry name" value="Probable tRNA modification gtpase trme, domain 1"/>
    <property type="match status" value="1"/>
</dbReference>
<dbReference type="Gene3D" id="1.20.120.430">
    <property type="entry name" value="tRNA modification GTPase MnmE domain 2"/>
    <property type="match status" value="1"/>
</dbReference>
<dbReference type="HAMAP" id="MF_00379">
    <property type="entry name" value="GTPase_MnmE"/>
    <property type="match status" value="1"/>
</dbReference>
<dbReference type="InterPro" id="IPR031168">
    <property type="entry name" value="G_TrmE"/>
</dbReference>
<dbReference type="InterPro" id="IPR006073">
    <property type="entry name" value="GTP-bd"/>
</dbReference>
<dbReference type="InterPro" id="IPR018948">
    <property type="entry name" value="GTP-bd_TrmE_N"/>
</dbReference>
<dbReference type="InterPro" id="IPR004520">
    <property type="entry name" value="GTPase_MnmE"/>
</dbReference>
<dbReference type="InterPro" id="IPR027368">
    <property type="entry name" value="MnmE_dom2"/>
</dbReference>
<dbReference type="InterPro" id="IPR025867">
    <property type="entry name" value="MnmE_helical"/>
</dbReference>
<dbReference type="InterPro" id="IPR027417">
    <property type="entry name" value="P-loop_NTPase"/>
</dbReference>
<dbReference type="InterPro" id="IPR005225">
    <property type="entry name" value="Small_GTP-bd"/>
</dbReference>
<dbReference type="InterPro" id="IPR027266">
    <property type="entry name" value="TrmE/GcvT_dom1"/>
</dbReference>
<dbReference type="NCBIfam" id="TIGR00450">
    <property type="entry name" value="mnmE_trmE_thdF"/>
    <property type="match status" value="1"/>
</dbReference>
<dbReference type="NCBIfam" id="NF003661">
    <property type="entry name" value="PRK05291.1-3"/>
    <property type="match status" value="1"/>
</dbReference>
<dbReference type="NCBIfam" id="TIGR00231">
    <property type="entry name" value="small_GTP"/>
    <property type="match status" value="1"/>
</dbReference>
<dbReference type="PANTHER" id="PTHR42714">
    <property type="entry name" value="TRNA MODIFICATION GTPASE GTPBP3"/>
    <property type="match status" value="1"/>
</dbReference>
<dbReference type="PANTHER" id="PTHR42714:SF2">
    <property type="entry name" value="TRNA MODIFICATION GTPASE GTPBP3, MITOCHONDRIAL"/>
    <property type="match status" value="1"/>
</dbReference>
<dbReference type="Pfam" id="PF01926">
    <property type="entry name" value="MMR_HSR1"/>
    <property type="match status" value="1"/>
</dbReference>
<dbReference type="Pfam" id="PF12631">
    <property type="entry name" value="MnmE_helical"/>
    <property type="match status" value="1"/>
</dbReference>
<dbReference type="Pfam" id="PF10396">
    <property type="entry name" value="TrmE_N"/>
    <property type="match status" value="1"/>
</dbReference>
<dbReference type="SUPFAM" id="SSF52540">
    <property type="entry name" value="P-loop containing nucleoside triphosphate hydrolases"/>
    <property type="match status" value="1"/>
</dbReference>
<dbReference type="SUPFAM" id="SSF116878">
    <property type="entry name" value="TrmE connector domain"/>
    <property type="match status" value="1"/>
</dbReference>
<dbReference type="PROSITE" id="PS51709">
    <property type="entry name" value="G_TRME"/>
    <property type="match status" value="1"/>
</dbReference>
<evidence type="ECO:0000255" key="1">
    <source>
        <dbReference type="HAMAP-Rule" id="MF_00379"/>
    </source>
</evidence>
<protein>
    <recommendedName>
        <fullName evidence="1">tRNA modification GTPase MnmE</fullName>
        <ecNumber evidence="1">3.6.-.-</ecNumber>
    </recommendedName>
</protein>
<feature type="chain" id="PRO_0000188897" description="tRNA modification GTPase MnmE">
    <location>
        <begin position="1"/>
        <end position="459"/>
    </location>
</feature>
<feature type="domain" description="TrmE-type G">
    <location>
        <begin position="221"/>
        <end position="380"/>
    </location>
</feature>
<feature type="binding site" evidence="1">
    <location>
        <position position="23"/>
    </location>
    <ligand>
        <name>(6S)-5-formyl-5,6,7,8-tetrahydrofolate</name>
        <dbReference type="ChEBI" id="CHEBI:57457"/>
    </ligand>
</feature>
<feature type="binding site" evidence="1">
    <location>
        <position position="85"/>
    </location>
    <ligand>
        <name>(6S)-5-formyl-5,6,7,8-tetrahydrofolate</name>
        <dbReference type="ChEBI" id="CHEBI:57457"/>
    </ligand>
</feature>
<feature type="binding site" evidence="1">
    <location>
        <position position="124"/>
    </location>
    <ligand>
        <name>(6S)-5-formyl-5,6,7,8-tetrahydrofolate</name>
        <dbReference type="ChEBI" id="CHEBI:57457"/>
    </ligand>
</feature>
<feature type="binding site" evidence="1">
    <location>
        <begin position="231"/>
        <end position="236"/>
    </location>
    <ligand>
        <name>GTP</name>
        <dbReference type="ChEBI" id="CHEBI:37565"/>
    </ligand>
</feature>
<feature type="binding site" evidence="1">
    <location>
        <position position="231"/>
    </location>
    <ligand>
        <name>K(+)</name>
        <dbReference type="ChEBI" id="CHEBI:29103"/>
    </ligand>
</feature>
<feature type="binding site" evidence="1">
    <location>
        <position position="235"/>
    </location>
    <ligand>
        <name>Mg(2+)</name>
        <dbReference type="ChEBI" id="CHEBI:18420"/>
    </ligand>
</feature>
<feature type="binding site" evidence="1">
    <location>
        <begin position="250"/>
        <end position="256"/>
    </location>
    <ligand>
        <name>GTP</name>
        <dbReference type="ChEBI" id="CHEBI:37565"/>
    </ligand>
</feature>
<feature type="binding site" evidence="1">
    <location>
        <position position="250"/>
    </location>
    <ligand>
        <name>K(+)</name>
        <dbReference type="ChEBI" id="CHEBI:29103"/>
    </ligand>
</feature>
<feature type="binding site" evidence="1">
    <location>
        <position position="252"/>
    </location>
    <ligand>
        <name>K(+)</name>
        <dbReference type="ChEBI" id="CHEBI:29103"/>
    </ligand>
</feature>
<feature type="binding site" evidence="1">
    <location>
        <position position="255"/>
    </location>
    <ligand>
        <name>K(+)</name>
        <dbReference type="ChEBI" id="CHEBI:29103"/>
    </ligand>
</feature>
<feature type="binding site" evidence="1">
    <location>
        <position position="256"/>
    </location>
    <ligand>
        <name>Mg(2+)</name>
        <dbReference type="ChEBI" id="CHEBI:18420"/>
    </ligand>
</feature>
<feature type="binding site" evidence="1">
    <location>
        <begin position="275"/>
        <end position="278"/>
    </location>
    <ligand>
        <name>GTP</name>
        <dbReference type="ChEBI" id="CHEBI:37565"/>
    </ligand>
</feature>
<feature type="binding site" evidence="1">
    <location>
        <position position="459"/>
    </location>
    <ligand>
        <name>(6S)-5-formyl-5,6,7,8-tetrahydrofolate</name>
        <dbReference type="ChEBI" id="CHEBI:57457"/>
    </ligand>
</feature>
<gene>
    <name evidence="1" type="primary">mnmE</name>
    <name evidence="1" type="synonym">trmE</name>
    <name type="ordered locus">OB3491</name>
</gene>
<reference key="1">
    <citation type="journal article" date="2002" name="Nucleic Acids Res.">
        <title>Genome sequence of Oceanobacillus iheyensis isolated from the Iheya Ridge and its unexpected adaptive capabilities to extreme environments.</title>
        <authorList>
            <person name="Takami H."/>
            <person name="Takaki Y."/>
            <person name="Uchiyama I."/>
        </authorList>
    </citation>
    <scope>NUCLEOTIDE SEQUENCE [LARGE SCALE GENOMIC DNA]</scope>
    <source>
        <strain>DSM 14371 / CIP 107618 / JCM 11309 / KCTC 3954 / HTE831</strain>
    </source>
</reference>
<organism>
    <name type="scientific">Oceanobacillus iheyensis (strain DSM 14371 / CIP 107618 / JCM 11309 / KCTC 3954 / HTE831)</name>
    <dbReference type="NCBI Taxonomy" id="221109"/>
    <lineage>
        <taxon>Bacteria</taxon>
        <taxon>Bacillati</taxon>
        <taxon>Bacillota</taxon>
        <taxon>Bacilli</taxon>
        <taxon>Bacillales</taxon>
        <taxon>Bacillaceae</taxon>
        <taxon>Oceanobacillus</taxon>
    </lineage>
</organism>
<accession>Q8CX54</accession>
<comment type="function">
    <text evidence="1">Exhibits a very high intrinsic GTPase hydrolysis rate. Involved in the addition of a carboxymethylaminomethyl (cmnm) group at the wobble position (U34) of certain tRNAs, forming tRNA-cmnm(5)s(2)U34.</text>
</comment>
<comment type="cofactor">
    <cofactor evidence="1">
        <name>K(+)</name>
        <dbReference type="ChEBI" id="CHEBI:29103"/>
    </cofactor>
    <text evidence="1">Binds 1 potassium ion per subunit.</text>
</comment>
<comment type="subunit">
    <text evidence="1">Homodimer. Heterotetramer of two MnmE and two MnmG subunits.</text>
</comment>
<comment type="subcellular location">
    <subcellularLocation>
        <location evidence="1">Cytoplasm</location>
    </subcellularLocation>
</comment>
<comment type="similarity">
    <text evidence="1">Belongs to the TRAFAC class TrmE-Era-EngA-EngB-Septin-like GTPase superfamily. TrmE GTPase family.</text>
</comment>
<proteinExistence type="inferred from homology"/>